<protein>
    <recommendedName>
        <fullName>Neuronal migration protein doublecortin</fullName>
    </recommendedName>
    <alternativeName>
        <fullName>Doublin</fullName>
    </alternativeName>
    <alternativeName>
        <fullName>Lissencephalin-X</fullName>
        <shortName>Lis-X</shortName>
    </alternativeName>
</protein>
<sequence length="365" mass="40574">MELDFGHFDERDKTSRNMRGSRMNGLPSPTHSAHCSFYRTRTLQALSNEKKAKKVRFYRNGDRYFKGIVYAVSSDRFRSFDALLADLTRSLSDNINLPQGVRYIYTIDGSRKIGSMDELEEGESYVCSSDNFFKKVEYTKNVNPNWSVNVKTSANMKAPQSLASSNSAQARENKDFVRPKLVTIIRSGVKPRKAVRVLLNKKTAHSFEQVLTDITEAIKLETGVVKKLYTLDGKQVTCLHDFFGDDDVFIACGPEKFRYAQDDFSLDENECRVMKGNPSATAGPKASPTPQKTSAKSPGPMRRSKSPADSGNDQDANGTSSSQLSTPKSKQSPISTPTSPGSLRKHKDLYLPLSLDDSDSLGDSM</sequence>
<reference key="1">
    <citation type="journal article" date="1998" name="Cell">
        <title>A novel CNS gene required for neuronal migration and involved in X-linked subcortical laminar heterotopia and lissencephaly syndrome.</title>
        <authorList>
            <person name="Des Portes V."/>
            <person name="Pinard J.-M."/>
            <person name="Billuart P."/>
            <person name="Vinet M.-C."/>
            <person name="Koulakoff A."/>
            <person name="Carrie A."/>
            <person name="Gelot A."/>
            <person name="Dupuis E."/>
            <person name="Motte J."/>
            <person name="Berwald-Netter Y."/>
            <person name="Catala M."/>
            <person name="Kahn A."/>
            <person name="Beldjord C."/>
            <person name="Chelly J."/>
        </authorList>
    </citation>
    <scope>NUCLEOTIDE SEQUENCE [GENOMIC DNA / MRNA] (ISOFORM 2)</scope>
    <scope>ALTERNATIVE SPLICING</scope>
    <scope>VARIANTS LISX1 ASN-62; HIS-125 AND TRP-192</scope>
    <source>
        <tissue>Fetal brain</tissue>
    </source>
</reference>
<reference key="2">
    <citation type="journal article" date="1998" name="Cell">
        <title>Doublecortin, a brain-specific gene mutated in human X-linked lissencephaly and double cortex syndrome, encodes a putative signaling protein.</title>
        <authorList>
            <person name="Gleeson J.G."/>
            <person name="Allen K.M."/>
            <person name="Fox J.W."/>
            <person name="Lamperti E.D."/>
            <person name="Berkovic S."/>
            <person name="Scheffer I."/>
            <person name="Cooper E.C."/>
            <person name="Dobyns W.B."/>
            <person name="Minnerath S.R."/>
            <person name="Ross M.E."/>
            <person name="Walsh C.A."/>
        </authorList>
    </citation>
    <scope>NUCLEOTIDE SEQUENCE [MRNA] (ISOFORM 2)</scope>
    <scope>VARIANTS LISX1 ARG-47; LEU-59 AND ARG-203</scope>
    <source>
        <tissue>Brain</tissue>
    </source>
</reference>
<reference key="3">
    <citation type="submission" date="1998-01" db="EMBL/GenBank/DDBJ databases">
        <title>X-linked neuronal migration disorder (lissencephaly/subcortical band heterotopia) is caused by mutation in a novel brain-specific protein, lissencephalin-X.</title>
        <authorList>
            <person name="Sossey-Alaoui K."/>
            <person name="Srivastava A.K."/>
        </authorList>
    </citation>
    <scope>NUCLEOTIDE SEQUENCE [MRNA] (ISOFORMS 1 AND 2)</scope>
    <source>
        <tissue>Fetal brain</tissue>
    </source>
</reference>
<reference key="4">
    <citation type="journal article" date="2005" name="Nature">
        <title>The DNA sequence of the human X chromosome.</title>
        <authorList>
            <person name="Ross M.T."/>
            <person name="Grafham D.V."/>
            <person name="Coffey A.J."/>
            <person name="Scherer S."/>
            <person name="McLay K."/>
            <person name="Muzny D."/>
            <person name="Platzer M."/>
            <person name="Howell G.R."/>
            <person name="Burrows C."/>
            <person name="Bird C.P."/>
            <person name="Frankish A."/>
            <person name="Lovell F.L."/>
            <person name="Howe K.L."/>
            <person name="Ashurst J.L."/>
            <person name="Fulton R.S."/>
            <person name="Sudbrak R."/>
            <person name="Wen G."/>
            <person name="Jones M.C."/>
            <person name="Hurles M.E."/>
            <person name="Andrews T.D."/>
            <person name="Scott C.E."/>
            <person name="Searle S."/>
            <person name="Ramser J."/>
            <person name="Whittaker A."/>
            <person name="Deadman R."/>
            <person name="Carter N.P."/>
            <person name="Hunt S.E."/>
            <person name="Chen R."/>
            <person name="Cree A."/>
            <person name="Gunaratne P."/>
            <person name="Havlak P."/>
            <person name="Hodgson A."/>
            <person name="Metzker M.L."/>
            <person name="Richards S."/>
            <person name="Scott G."/>
            <person name="Steffen D."/>
            <person name="Sodergren E."/>
            <person name="Wheeler D.A."/>
            <person name="Worley K.C."/>
            <person name="Ainscough R."/>
            <person name="Ambrose K.D."/>
            <person name="Ansari-Lari M.A."/>
            <person name="Aradhya S."/>
            <person name="Ashwell R.I."/>
            <person name="Babbage A.K."/>
            <person name="Bagguley C.L."/>
            <person name="Ballabio A."/>
            <person name="Banerjee R."/>
            <person name="Barker G.E."/>
            <person name="Barlow K.F."/>
            <person name="Barrett I.P."/>
            <person name="Bates K.N."/>
            <person name="Beare D.M."/>
            <person name="Beasley H."/>
            <person name="Beasley O."/>
            <person name="Beck A."/>
            <person name="Bethel G."/>
            <person name="Blechschmidt K."/>
            <person name="Brady N."/>
            <person name="Bray-Allen S."/>
            <person name="Bridgeman A.M."/>
            <person name="Brown A.J."/>
            <person name="Brown M.J."/>
            <person name="Bonnin D."/>
            <person name="Bruford E.A."/>
            <person name="Buhay C."/>
            <person name="Burch P."/>
            <person name="Burford D."/>
            <person name="Burgess J."/>
            <person name="Burrill W."/>
            <person name="Burton J."/>
            <person name="Bye J.M."/>
            <person name="Carder C."/>
            <person name="Carrel L."/>
            <person name="Chako J."/>
            <person name="Chapman J.C."/>
            <person name="Chavez D."/>
            <person name="Chen E."/>
            <person name="Chen G."/>
            <person name="Chen Y."/>
            <person name="Chen Z."/>
            <person name="Chinault C."/>
            <person name="Ciccodicola A."/>
            <person name="Clark S.Y."/>
            <person name="Clarke G."/>
            <person name="Clee C.M."/>
            <person name="Clegg S."/>
            <person name="Clerc-Blankenburg K."/>
            <person name="Clifford K."/>
            <person name="Cobley V."/>
            <person name="Cole C.G."/>
            <person name="Conquer J.S."/>
            <person name="Corby N."/>
            <person name="Connor R.E."/>
            <person name="David R."/>
            <person name="Davies J."/>
            <person name="Davis C."/>
            <person name="Davis J."/>
            <person name="Delgado O."/>
            <person name="Deshazo D."/>
            <person name="Dhami P."/>
            <person name="Ding Y."/>
            <person name="Dinh H."/>
            <person name="Dodsworth S."/>
            <person name="Draper H."/>
            <person name="Dugan-Rocha S."/>
            <person name="Dunham A."/>
            <person name="Dunn M."/>
            <person name="Durbin K.J."/>
            <person name="Dutta I."/>
            <person name="Eades T."/>
            <person name="Ellwood M."/>
            <person name="Emery-Cohen A."/>
            <person name="Errington H."/>
            <person name="Evans K.L."/>
            <person name="Faulkner L."/>
            <person name="Francis F."/>
            <person name="Frankland J."/>
            <person name="Fraser A.E."/>
            <person name="Galgoczy P."/>
            <person name="Gilbert J."/>
            <person name="Gill R."/>
            <person name="Gloeckner G."/>
            <person name="Gregory S.G."/>
            <person name="Gribble S."/>
            <person name="Griffiths C."/>
            <person name="Grocock R."/>
            <person name="Gu Y."/>
            <person name="Gwilliam R."/>
            <person name="Hamilton C."/>
            <person name="Hart E.A."/>
            <person name="Hawes A."/>
            <person name="Heath P.D."/>
            <person name="Heitmann K."/>
            <person name="Hennig S."/>
            <person name="Hernandez J."/>
            <person name="Hinzmann B."/>
            <person name="Ho S."/>
            <person name="Hoffs M."/>
            <person name="Howden P.J."/>
            <person name="Huckle E.J."/>
            <person name="Hume J."/>
            <person name="Hunt P.J."/>
            <person name="Hunt A.R."/>
            <person name="Isherwood J."/>
            <person name="Jacob L."/>
            <person name="Johnson D."/>
            <person name="Jones S."/>
            <person name="de Jong P.J."/>
            <person name="Joseph S.S."/>
            <person name="Keenan S."/>
            <person name="Kelly S."/>
            <person name="Kershaw J.K."/>
            <person name="Khan Z."/>
            <person name="Kioschis P."/>
            <person name="Klages S."/>
            <person name="Knights A.J."/>
            <person name="Kosiura A."/>
            <person name="Kovar-Smith C."/>
            <person name="Laird G.K."/>
            <person name="Langford C."/>
            <person name="Lawlor S."/>
            <person name="Leversha M."/>
            <person name="Lewis L."/>
            <person name="Liu W."/>
            <person name="Lloyd C."/>
            <person name="Lloyd D.M."/>
            <person name="Loulseged H."/>
            <person name="Loveland J.E."/>
            <person name="Lovell J.D."/>
            <person name="Lozado R."/>
            <person name="Lu J."/>
            <person name="Lyne R."/>
            <person name="Ma J."/>
            <person name="Maheshwari M."/>
            <person name="Matthews L.H."/>
            <person name="McDowall J."/>
            <person name="McLaren S."/>
            <person name="McMurray A."/>
            <person name="Meidl P."/>
            <person name="Meitinger T."/>
            <person name="Milne S."/>
            <person name="Miner G."/>
            <person name="Mistry S.L."/>
            <person name="Morgan M."/>
            <person name="Morris S."/>
            <person name="Mueller I."/>
            <person name="Mullikin J.C."/>
            <person name="Nguyen N."/>
            <person name="Nordsiek G."/>
            <person name="Nyakatura G."/>
            <person name="O'dell C.N."/>
            <person name="Okwuonu G."/>
            <person name="Palmer S."/>
            <person name="Pandian R."/>
            <person name="Parker D."/>
            <person name="Parrish J."/>
            <person name="Pasternak S."/>
            <person name="Patel D."/>
            <person name="Pearce A.V."/>
            <person name="Pearson D.M."/>
            <person name="Pelan S.E."/>
            <person name="Perez L."/>
            <person name="Porter K.M."/>
            <person name="Ramsey Y."/>
            <person name="Reichwald K."/>
            <person name="Rhodes S."/>
            <person name="Ridler K.A."/>
            <person name="Schlessinger D."/>
            <person name="Schueler M.G."/>
            <person name="Sehra H.K."/>
            <person name="Shaw-Smith C."/>
            <person name="Shen H."/>
            <person name="Sheridan E.M."/>
            <person name="Shownkeen R."/>
            <person name="Skuce C.D."/>
            <person name="Smith M.L."/>
            <person name="Sotheran E.C."/>
            <person name="Steingruber H.E."/>
            <person name="Steward C.A."/>
            <person name="Storey R."/>
            <person name="Swann R.M."/>
            <person name="Swarbreck D."/>
            <person name="Tabor P.E."/>
            <person name="Taudien S."/>
            <person name="Taylor T."/>
            <person name="Teague B."/>
            <person name="Thomas K."/>
            <person name="Thorpe A."/>
            <person name="Timms K."/>
            <person name="Tracey A."/>
            <person name="Trevanion S."/>
            <person name="Tromans A.C."/>
            <person name="d'Urso M."/>
            <person name="Verduzco D."/>
            <person name="Villasana D."/>
            <person name="Waldron L."/>
            <person name="Wall M."/>
            <person name="Wang Q."/>
            <person name="Warren J."/>
            <person name="Warry G.L."/>
            <person name="Wei X."/>
            <person name="West A."/>
            <person name="Whitehead S.L."/>
            <person name="Whiteley M.N."/>
            <person name="Wilkinson J.E."/>
            <person name="Willey D.L."/>
            <person name="Williams G."/>
            <person name="Williams L."/>
            <person name="Williamson A."/>
            <person name="Williamson H."/>
            <person name="Wilming L."/>
            <person name="Woodmansey R.L."/>
            <person name="Wray P.W."/>
            <person name="Yen J."/>
            <person name="Zhang J."/>
            <person name="Zhou J."/>
            <person name="Zoghbi H."/>
            <person name="Zorilla S."/>
            <person name="Buck D."/>
            <person name="Reinhardt R."/>
            <person name="Poustka A."/>
            <person name="Rosenthal A."/>
            <person name="Lehrach H."/>
            <person name="Meindl A."/>
            <person name="Minx P.J."/>
            <person name="Hillier L.W."/>
            <person name="Willard H.F."/>
            <person name="Wilson R.K."/>
            <person name="Waterston R.H."/>
            <person name="Rice C.M."/>
            <person name="Vaudin M."/>
            <person name="Coulson A."/>
            <person name="Nelson D.L."/>
            <person name="Weinstock G."/>
            <person name="Sulston J.E."/>
            <person name="Durbin R.M."/>
            <person name="Hubbard T."/>
            <person name="Gibbs R.A."/>
            <person name="Beck S."/>
            <person name="Rogers J."/>
            <person name="Bentley D.R."/>
        </authorList>
    </citation>
    <scope>NUCLEOTIDE SEQUENCE [LARGE SCALE GENOMIC DNA]</scope>
</reference>
<reference key="5">
    <citation type="submission" date="2005-09" db="EMBL/GenBank/DDBJ databases">
        <authorList>
            <person name="Mural R.J."/>
            <person name="Istrail S."/>
            <person name="Sutton G.G."/>
            <person name="Florea L."/>
            <person name="Halpern A.L."/>
            <person name="Mobarry C.M."/>
            <person name="Lippert R."/>
            <person name="Walenz B."/>
            <person name="Shatkay H."/>
            <person name="Dew I."/>
            <person name="Miller J.R."/>
            <person name="Flanigan M.J."/>
            <person name="Edwards N.J."/>
            <person name="Bolanos R."/>
            <person name="Fasulo D."/>
            <person name="Halldorsson B.V."/>
            <person name="Hannenhalli S."/>
            <person name="Turner R."/>
            <person name="Yooseph S."/>
            <person name="Lu F."/>
            <person name="Nusskern D.R."/>
            <person name="Shue B.C."/>
            <person name="Zheng X.H."/>
            <person name="Zhong F."/>
            <person name="Delcher A.L."/>
            <person name="Huson D.H."/>
            <person name="Kravitz S.A."/>
            <person name="Mouchard L."/>
            <person name="Reinert K."/>
            <person name="Remington K.A."/>
            <person name="Clark A.G."/>
            <person name="Waterman M.S."/>
            <person name="Eichler E.E."/>
            <person name="Adams M.D."/>
            <person name="Hunkapiller M.W."/>
            <person name="Myers E.W."/>
            <person name="Venter J.C."/>
        </authorList>
    </citation>
    <scope>NUCLEOTIDE SEQUENCE [LARGE SCALE GENOMIC DNA]</scope>
</reference>
<reference key="6">
    <citation type="journal article" date="2004" name="Genome Res.">
        <title>The status, quality, and expansion of the NIH full-length cDNA project: the Mammalian Gene Collection (MGC).</title>
        <authorList>
            <consortium name="The MGC Project Team"/>
        </authorList>
    </citation>
    <scope>NUCLEOTIDE SEQUENCE [LARGE SCALE MRNA] (ISOFORM 2)</scope>
    <source>
        <tissue>Brain</tissue>
    </source>
</reference>
<reference key="7">
    <citation type="journal article" date="2006" name="Cell">
        <title>Global, in vivo, and site-specific phosphorylation dynamics in signaling networks.</title>
        <authorList>
            <person name="Olsen J.V."/>
            <person name="Blagoev B."/>
            <person name="Gnad F."/>
            <person name="Macek B."/>
            <person name="Kumar C."/>
            <person name="Mortensen P."/>
            <person name="Mann M."/>
        </authorList>
    </citation>
    <scope>IDENTIFICATION BY MASS SPECTROMETRY [LARGE SCALE ANALYSIS]</scope>
    <source>
        <tissue>Cervix carcinoma</tissue>
    </source>
</reference>
<reference key="8">
    <citation type="journal article" date="2012" name="Cytoskeleton">
        <title>Dyrk kinases regulate phosphorylation of doublecortin, cytoskeletal organization, and neuronal morphology.</title>
        <authorList>
            <person name="Slepak T.I."/>
            <person name="Salay L.D."/>
            <person name="Lemmon V.P."/>
            <person name="Bixby J.L."/>
        </authorList>
    </citation>
    <scope>FUNCTION</scope>
    <scope>PHOSPHORYLATION AT SER-306</scope>
</reference>
<reference key="9">
    <citation type="journal article" date="2014" name="Am. J. Hum. Genet.">
        <title>Mutations in USP9X are associated with X-linked intellectual disability and disrupt neuronal cell migration and growth.</title>
        <authorList>
            <person name="Homan C.C."/>
            <person name="Kumar R."/>
            <person name="Nguyen L.S."/>
            <person name="Haan E."/>
            <person name="Raymond F.L."/>
            <person name="Abidi F."/>
            <person name="Raynaud M."/>
            <person name="Schwartz C.E."/>
            <person name="Wood S.A."/>
            <person name="Gecz J."/>
            <person name="Jolly L.A."/>
        </authorList>
    </citation>
    <scope>INTERACTION WITH USP9X</scope>
</reference>
<reference key="10">
    <citation type="journal article" date="2003" name="Nat. Struct. Biol.">
        <title>The DCX-domain tandems of doublecortin and doublecortin-like kinase.</title>
        <authorList>
            <person name="Kim M.H."/>
            <person name="Cierpicki T."/>
            <person name="Derewenda U."/>
            <person name="Krowarsch D."/>
            <person name="Feng Y."/>
            <person name="Devedjiev Y."/>
            <person name="Dauter Z."/>
            <person name="Walsh C.A."/>
            <person name="Otlewski J."/>
            <person name="Bushweller J.H."/>
            <person name="Derewenda Z.S."/>
        </authorList>
    </citation>
    <scope>STRUCTURE BY NMR OF 45-150</scope>
</reference>
<reference key="11">
    <citation type="journal article" date="1998" name="Hum. Mol. Genet.">
        <title>Human doublecortin (DCX) and the homologous gene in mouse encode a putative Ca2+-dependent signaling protein which is mutated in human X-linked neuronal migration defects.</title>
        <authorList>
            <person name="Sossey-Alaoui K."/>
            <person name="Hartung A.J."/>
            <person name="Guerrini R."/>
            <person name="Manchester D.K."/>
            <person name="Posar A."/>
            <person name="Puche-Mira A."/>
            <person name="Andermann E."/>
            <person name="Dobyns W.B."/>
            <person name="Srivastava A.K."/>
        </authorList>
    </citation>
    <scope>VARIANTS LISX1/SBHX LEU-78; ALA-100; CYS-186 AND LYS-200</scope>
</reference>
<reference key="12">
    <citation type="journal article" date="1998" name="Hum. Mol. Genet.">
        <title>LIS1 and XLIS (DCX) mutations cause most classical lissencephaly, but different patterns of malformation.</title>
        <authorList>
            <person name="Pilz D.T."/>
            <person name="Matsumoto N."/>
            <person name="Minnerath S.R."/>
            <person name="Mills P."/>
            <person name="Gleeson J.G."/>
            <person name="Allen K.M."/>
            <person name="Walsh C.A."/>
            <person name="Barkovich A.J."/>
            <person name="Dobyns W.B."/>
            <person name="Ledbetter D.H."/>
            <person name="Ross M.E."/>
        </authorList>
    </citation>
    <scope>VARIANTS LISX1 SER-43 AND SER-102</scope>
</reference>
<reference key="13">
    <citation type="journal article" date="1998" name="Hum. Mol. Genet.">
        <title>Doublecortin is the major gene causing X-linked subcortical laminar heterotopia (SCLH).</title>
        <authorList>
            <person name="Des Portes V."/>
            <person name="Francis F."/>
            <person name="Pinard J.-M."/>
            <person name="Desguerre I."/>
            <person name="Moutard M.-L."/>
            <person name="Snoeck I."/>
            <person name="Meiners L.C."/>
            <person name="Capron F."/>
            <person name="Cusmai R."/>
            <person name="Ricci S."/>
            <person name="Motte J."/>
            <person name="Echenne B."/>
            <person name="Ponsot G."/>
            <person name="Dulac O."/>
            <person name="Chelly J."/>
            <person name="Beldjord C."/>
        </authorList>
    </citation>
    <scope>VARIANTS SBHX ASP-125; GLU-223 AND THR-250</scope>
</reference>
<reference key="14">
    <citation type="journal article" date="1999" name="Ann. Neurol.">
        <title>Characterization of mutations in the gene doublecortin in patients with double cortex syndrome.</title>
        <authorList>
            <person name="Gleeson J.G."/>
            <person name="Minnerath S.R."/>
            <person name="Fox J.W."/>
            <person name="Allen K.M."/>
            <person name="Luo R.F."/>
            <person name="Hong S.E."/>
            <person name="Berg M.J."/>
            <person name="Kuzniecky R."/>
            <person name="Reitnauer P.J."/>
            <person name="Borgatti R."/>
            <person name="Puche-Mira A."/>
            <person name="Guerrini R."/>
            <person name="Holmes G.L."/>
            <person name="Rooney C.M."/>
            <person name="Berkovic S."/>
            <person name="Scheffer I."/>
            <person name="Cooper E.C."/>
            <person name="Ricci S."/>
            <person name="Cusmai R."/>
            <person name="Crawford T.O."/>
            <person name="Leroy R."/>
            <person name="Andermann E."/>
            <person name="Wheless J.W."/>
            <person name="Dobyns W.B."/>
            <person name="Ross M.E."/>
            <person name="Walsh C.A."/>
        </authorList>
    </citation>
    <scope>VARIANTS SBHX ARG-191; ILE-222; ILE-236; ASN-250 AND ASP-253</scope>
</reference>
<reference key="15">
    <citation type="journal article" date="1999" name="Hum. Genet.">
        <title>A novel mutation of the doublecortin gene in Japanese patients with X-linked lissencephaly and subcortical band heterotopia.</title>
        <authorList>
            <person name="Kato M."/>
            <person name="Kimura T."/>
            <person name="Lin C."/>
            <person name="Ito A."/>
            <person name="Kodama S."/>
            <person name="Morikawa T."/>
            <person name="Soga T."/>
            <person name="Hayasaka K."/>
        </authorList>
    </citation>
    <scope>VARIANT SBHX CYS-186</scope>
</reference>
<reference key="16">
    <citation type="journal article" date="1999" name="Hum. Mol. Genet.">
        <title>Subcortical band heterotopia in rare affected males can be caused by missense mutations in DCX (XLIS) or LIS1.</title>
        <authorList>
            <person name="Pilz D.T."/>
            <person name="Kuc J."/>
            <person name="Matsumoto N."/>
            <person name="Bodurtha J."/>
            <person name="Bernadi B."/>
            <person name="Tassinari C.A."/>
            <person name="Dobyns W.B."/>
            <person name="Ledbetter D.H."/>
        </authorList>
    </citation>
    <scope>VARIANTS SBHX HIS-78 AND GLY-89</scope>
</reference>
<reference key="17">
    <citation type="journal article" date="2000" name="J. Hum. Genet.">
        <title>Genetic alteration of the DCX gene in Japanese patients with subcortical laminar heterotopia or isolated lissencephaly sequence.</title>
        <authorList>
            <person name="Sakamoto M."/>
            <person name="Ono J."/>
            <person name="Okada S."/>
            <person name="Nakamura Y."/>
            <person name="Kurahashi H."/>
        </authorList>
    </citation>
    <scope>VARIANT SBHX VAL-251</scope>
</reference>
<reference key="18">
    <citation type="journal article" date="2001" name="Ann. Neurol.">
        <title>Mutation of the doublecortin gene in male patients with double cortex syndrome: somatic mosaicism detected by hair root analysis.</title>
        <authorList>
            <person name="Kato M."/>
            <person name="Kanai M."/>
            <person name="Soma O."/>
            <person name="Takusa Y."/>
            <person name="Kimura T."/>
            <person name="Numakura C."/>
            <person name="Matsuki T."/>
            <person name="Nakamura S."/>
            <person name="Hayasaka K."/>
        </authorList>
    </citation>
    <scope>VARIANT SBHX ASN-50</scope>
</reference>
<reference key="19">
    <citation type="journal article" date="2001" name="Eur. J. Hum. Genet.">
        <title>Mutation analysis of the DCX gene and genotype/phenotype correlation in subcortical band heterotopia.</title>
        <authorList>
            <person name="Matsumoto N."/>
            <person name="Leventer R.J."/>
            <person name="Kuc J.A."/>
            <person name="Mewborn S.K."/>
            <person name="Dudlicek L.L."/>
            <person name="Ramocki M.B."/>
            <person name="Pilz D.T."/>
            <person name="Mills P.L."/>
            <person name="Das S."/>
            <person name="Ross M.E."/>
            <person name="Ledbetter D.H."/>
            <person name="Dobyns W.B."/>
        </authorList>
    </citation>
    <scope>VARIANTS SBHX ARG-47; HIS-59; LEU-78; HIS-86; GLY-89; ARG-97; ALA-100; THR-104; CYS-186; LEU-191; TRP-192; HIS-196; ILE-200; LYS-200; ALA-203; ARG-203; THR-214; VAL-223 AND SER-251</scope>
</reference>
<reference key="20">
    <citation type="journal article" date="2001" name="Neurology">
        <title>Incomplete penetrance with normal MRI in a woman with germline mutation of the DCX gene.</title>
        <authorList>
            <person name="Demelas L."/>
            <person name="Serra G."/>
            <person name="Conti M."/>
            <person name="Achene A."/>
            <person name="Mastropaolo C."/>
            <person name="Matsumoto N."/>
            <person name="Dudlicek L.L."/>
            <person name="Mills P.L."/>
            <person name="Dobyns W.B."/>
            <person name="Ledbetter D.H."/>
            <person name="Das S."/>
        </authorList>
    </citation>
    <scope>VARIANT LISX1 HIS-196</scope>
</reference>
<reference key="21">
    <citation type="journal article" date="2002" name="Brain">
        <title>Subcortical band heterotopia (SBH) in males: clinical, imaging and genetic findings in comparison with females.</title>
        <authorList>
            <person name="D'Agostino M.D."/>
            <person name="Bernasconi A."/>
            <person name="Das S."/>
            <person name="Bastos A."/>
            <person name="Valerio R.M."/>
            <person name="Palmini A."/>
            <person name="Costa da Costa J."/>
            <person name="Scheffer I.E."/>
            <person name="Berkovic S."/>
            <person name="Guerrini R."/>
            <person name="Dravet C."/>
            <person name="Ono J."/>
            <person name="Gigli G."/>
            <person name="Federico A."/>
            <person name="Booth F."/>
            <person name="Bernardi B."/>
            <person name="Volpi L."/>
            <person name="Tassinari C.A."/>
            <person name="Guggenheim M.A."/>
            <person name="Ledbetter D.H."/>
            <person name="Gleeson J.G."/>
            <person name="Lopes-Cendes I."/>
            <person name="Vossler D.G."/>
            <person name="Malaspina E."/>
            <person name="Franzoni E."/>
            <person name="Sartori R.J."/>
            <person name="Mitchell M.H."/>
            <person name="Mercho S."/>
            <person name="Dubeau F."/>
            <person name="Andermann F."/>
            <person name="Dobyns W.B."/>
            <person name="Andermann E."/>
        </authorList>
    </citation>
    <scope>VARIANTS SBHX GLU-67 AND CYS-178</scope>
</reference>
<reference key="22">
    <citation type="journal article" date="2002" name="Seizure">
        <title>So-called 'cryptogenic' partial seizures resulting from a subtle cortical dysgenesis due to a doublecortin gene mutation.</title>
        <authorList>
            <person name="des Portes V."/>
            <person name="Abaoub L."/>
            <person name="Joannard A."/>
            <person name="Souville I."/>
            <person name="Francis F."/>
            <person name="Pinard J.-M."/>
            <person name="Chelly J."/>
            <person name="Beldjord C."/>
            <person name="Jouk P.S."/>
        </authorList>
    </citation>
    <scope>VARIANT EPILEPSY SER-196</scope>
</reference>
<reference key="23">
    <citation type="journal article" date="2003" name="Neurology">
        <title>Somatic mosaicism and variable penetrance in doublecortin-associated migration disorders.</title>
        <authorList>
            <person name="Aigner L."/>
            <person name="Uyanik G."/>
            <person name="Couillard-Despres S."/>
            <person name="Ploetz S."/>
            <person name="Wolff G."/>
            <person name="Morris-Rosendahl D."/>
            <person name="Martin P."/>
            <person name="Eckel U."/>
            <person name="Spranger S."/>
            <person name="Otte J."/>
            <person name="Woerle H."/>
            <person name="Holthausen H."/>
            <person name="Apheshiotis N."/>
            <person name="Fluegel D."/>
            <person name="Winkler J."/>
        </authorList>
    </citation>
    <scope>VARIANTS LISX1 ILE-42; ASP-60; SER-71 AND LEU-243</scope>
</reference>
<reference key="24">
    <citation type="journal article" date="2016" name="Eur. J. Paediatr. Neurol.">
        <title>A novel DCX missense mutation in a family with X-linked lissencephaly and subcortical band heterotopia syndrome inherited from a low-level somatic mosaic mother: Genetic and functional studies.</title>
        <authorList>
            <person name="Tsai M.H."/>
            <person name="Kuo P.W."/>
            <person name="Myers C.T."/>
            <person name="Li S.W."/>
            <person name="Lin W.C."/>
            <person name="Fu T.Y."/>
            <person name="Chang H.Y."/>
            <person name="Mefford H.C."/>
            <person name="Chang Y.C."/>
            <person name="Tsai J.W."/>
        </authorList>
    </citation>
    <scope>VARIANT LISX1 GLY-262</scope>
    <scope>CHARACTERIZATION OF VARIANT LISX1 GLY-262</scope>
    <scope>SUBUNIT</scope>
</reference>
<accession>O43602</accession>
<accession>A6NFY6</accession>
<accession>A9Z1V8</accession>
<accession>D3DUY8</accession>
<accession>D3DUY9</accession>
<accession>D3DUZ0</accession>
<accession>O43911</accession>
<accession>Q5JYZ5</accession>
<gene>
    <name type="primary">DCX</name>
    <name type="synonym">DBCN</name>
    <name type="synonym">LISX</name>
</gene>
<organism>
    <name type="scientific">Homo sapiens</name>
    <name type="common">Human</name>
    <dbReference type="NCBI Taxonomy" id="9606"/>
    <lineage>
        <taxon>Eukaryota</taxon>
        <taxon>Metazoa</taxon>
        <taxon>Chordata</taxon>
        <taxon>Craniata</taxon>
        <taxon>Vertebrata</taxon>
        <taxon>Euteleostomi</taxon>
        <taxon>Mammalia</taxon>
        <taxon>Eutheria</taxon>
        <taxon>Euarchontoglires</taxon>
        <taxon>Primates</taxon>
        <taxon>Haplorrhini</taxon>
        <taxon>Catarrhini</taxon>
        <taxon>Hominidae</taxon>
        <taxon>Homo</taxon>
    </lineage>
</organism>
<proteinExistence type="evidence at protein level"/>
<evidence type="ECO:0000250" key="1">
    <source>
        <dbReference type="UniProtKB" id="O88809"/>
    </source>
</evidence>
<evidence type="ECO:0000250" key="2">
    <source>
        <dbReference type="UniProtKB" id="Q9ESI7"/>
    </source>
</evidence>
<evidence type="ECO:0000255" key="3"/>
<evidence type="ECO:0000255" key="4">
    <source>
        <dbReference type="PROSITE-ProRule" id="PRU00072"/>
    </source>
</evidence>
<evidence type="ECO:0000256" key="5">
    <source>
        <dbReference type="SAM" id="MobiDB-lite"/>
    </source>
</evidence>
<evidence type="ECO:0000269" key="6">
    <source>
    </source>
</evidence>
<evidence type="ECO:0000269" key="7">
    <source>
    </source>
</evidence>
<evidence type="ECO:0000269" key="8">
    <source>
    </source>
</evidence>
<evidence type="ECO:0000269" key="9">
    <source>
    </source>
</evidence>
<evidence type="ECO:0000269" key="10">
    <source>
    </source>
</evidence>
<evidence type="ECO:0000269" key="11">
    <source>
    </source>
</evidence>
<evidence type="ECO:0000269" key="12">
    <source>
    </source>
</evidence>
<evidence type="ECO:0000269" key="13">
    <source>
    </source>
</evidence>
<evidence type="ECO:0000269" key="14">
    <source>
    </source>
</evidence>
<evidence type="ECO:0000269" key="15">
    <source>
    </source>
</evidence>
<evidence type="ECO:0000269" key="16">
    <source>
    </source>
</evidence>
<evidence type="ECO:0000269" key="17">
    <source>
    </source>
</evidence>
<evidence type="ECO:0000269" key="18">
    <source>
    </source>
</evidence>
<evidence type="ECO:0000269" key="19">
    <source>
    </source>
</evidence>
<evidence type="ECO:0000269" key="20">
    <source>
    </source>
</evidence>
<evidence type="ECO:0000269" key="21">
    <source>
    </source>
</evidence>
<evidence type="ECO:0000269" key="22">
    <source>
    </source>
</evidence>
<evidence type="ECO:0000269" key="23">
    <source>
    </source>
</evidence>
<evidence type="ECO:0000303" key="24">
    <source>
    </source>
</evidence>
<evidence type="ECO:0000303" key="25">
    <source>
    </source>
</evidence>
<evidence type="ECO:0000303" key="26">
    <source>
    </source>
</evidence>
<evidence type="ECO:0000303" key="27">
    <source ref="3"/>
</evidence>
<evidence type="ECO:0000305" key="28"/>
<evidence type="ECO:0007829" key="29">
    <source>
        <dbReference type="PDB" id="1MJD"/>
    </source>
</evidence>
<evidence type="ECO:0007829" key="30">
    <source>
        <dbReference type="PDB" id="5IO9"/>
    </source>
</evidence>
<evidence type="ECO:0007829" key="31">
    <source>
        <dbReference type="PDB" id="5IP4"/>
    </source>
</evidence>
<feature type="chain" id="PRO_0000079833" description="Neuronal migration protein doublecortin">
    <location>
        <begin position="1"/>
        <end position="365"/>
    </location>
</feature>
<feature type="domain" description="Doublecortin 1" evidence="4">
    <location>
        <begin position="53"/>
        <end position="139"/>
    </location>
</feature>
<feature type="domain" description="Doublecortin 2" evidence="4">
    <location>
        <begin position="180"/>
        <end position="263"/>
    </location>
</feature>
<feature type="region of interest" description="Disordered" evidence="5">
    <location>
        <begin position="11"/>
        <end position="31"/>
    </location>
</feature>
<feature type="region of interest" description="Disordered" evidence="5">
    <location>
        <begin position="275"/>
        <end position="365"/>
    </location>
</feature>
<feature type="compositionally biased region" description="Polar residues" evidence="5">
    <location>
        <begin position="307"/>
        <end position="341"/>
    </location>
</feature>
<feature type="compositionally biased region" description="Acidic residues" evidence="5">
    <location>
        <begin position="356"/>
        <end position="365"/>
    </location>
</feature>
<feature type="modified residue" description="Phosphothreonine; by PKC" evidence="3">
    <location>
        <position position="14"/>
    </location>
</feature>
<feature type="modified residue" description="Phosphoserine; by CDK5" evidence="1">
    <location>
        <position position="28"/>
    </location>
</feature>
<feature type="modified residue" description="Phosphoserine; by MARK1 and PKA" evidence="2">
    <location>
        <position position="47"/>
    </location>
</feature>
<feature type="modified residue" description="Phosphotyrosine; by ABL" evidence="3">
    <location>
        <position position="70"/>
    </location>
</feature>
<feature type="modified residue" description="Phosphoserine; by PKC" evidence="3">
    <location>
        <position position="74"/>
    </location>
</feature>
<feature type="modified residue" description="Phosphoserine; by CK2" evidence="3">
    <location>
        <position position="90"/>
    </location>
</feature>
<feature type="modified residue" description="Phosphoserine; by PKC" evidence="3">
    <location>
        <position position="110"/>
    </location>
</feature>
<feature type="modified residue" description="Phosphoserine; by CK2, MARK1 and PKA" evidence="2">
    <location>
        <position position="115"/>
    </location>
</feature>
<feature type="modified residue" description="Phosphoserine; by CK2" evidence="1">
    <location>
        <position position="265"/>
    </location>
</feature>
<feature type="modified residue" description="Phosphoserine; by CDK5" evidence="1">
    <location>
        <position position="287"/>
    </location>
</feature>
<feature type="modified residue" description="Phosphothreonine; by CDK5" evidence="1">
    <location>
        <position position="289"/>
    </location>
</feature>
<feature type="modified residue" description="Phosphoserine; by PKC" evidence="3">
    <location>
        <position position="294"/>
    </location>
</feature>
<feature type="modified residue" description="Phosphoserine; by CDK5" evidence="1">
    <location>
        <position position="297"/>
    </location>
</feature>
<feature type="modified residue" description="Phosphoserine; by CK2" evidence="1 3">
    <location>
        <position position="306"/>
    </location>
</feature>
<feature type="modified residue" description="Phosphoserine; by DYRK2" evidence="15">
    <location>
        <position position="306"/>
    </location>
</feature>
<feature type="modified residue" description="Phosphothreonine; by CDK5" evidence="1">
    <location>
        <position position="326"/>
    </location>
</feature>
<feature type="modified residue" description="Phosphothreonine; by PKC and MAPK" evidence="3">
    <location>
        <position position="326"/>
    </location>
</feature>
<feature type="modified residue" description="Phosphoserine; by CDK5" evidence="1">
    <location>
        <position position="332"/>
    </location>
</feature>
<feature type="modified residue" description="Phosphoserine; by MAPK" evidence="3">
    <location>
        <position position="332"/>
    </location>
</feature>
<feature type="modified residue" description="Phosphothreonine; by MAPK" evidence="3">
    <location>
        <position position="336"/>
    </location>
</feature>
<feature type="modified residue" description="Phosphoserine; by CDK5" evidence="1">
    <location>
        <position position="339"/>
    </location>
</feature>
<feature type="modified residue" description="Phosphoserine; by MAPK" evidence="3">
    <location>
        <position position="339"/>
    </location>
</feature>
<feature type="modified residue" description="Phosphoserine; by PKC" evidence="3">
    <location>
        <position position="342"/>
    </location>
</feature>
<feature type="modified residue" description="Phosphoserine; by CK2" evidence="3">
    <location>
        <position position="354"/>
    </location>
</feature>
<feature type="modified residue" description="Phosphoserine; by CK2" evidence="3">
    <location>
        <position position="360"/>
    </location>
</feature>
<feature type="splice variant" id="VSP_058155" description="In isoform 2." evidence="24 25 26 27">
    <original>SGNDQD</original>
    <variation>S</variation>
    <location>
        <begin position="310"/>
        <end position="315"/>
    </location>
</feature>
<feature type="sequence variant" id="VAR_026022" description="In LISX1." evidence="14">
    <original>T</original>
    <variation>I</variation>
    <location>
        <position position="42"/>
    </location>
</feature>
<feature type="sequence variant" id="VAR_007819" description="In LISX1; dbSNP:rs587783521." evidence="22">
    <original>L</original>
    <variation>S</variation>
    <location>
        <position position="43"/>
    </location>
</feature>
<feature type="sequence variant" id="VAR_007820" description="In LISX1 and SBHX; dbSNP:rs104894783." evidence="9 19">
    <original>S</original>
    <variation>R</variation>
    <location>
        <position position="47"/>
    </location>
</feature>
<feature type="sequence variant" id="VAR_026023" description="In SBHX; dbSNP:rs587783523." evidence="11">
    <original>K</original>
    <variation>N</variation>
    <location>
        <position position="50"/>
    </location>
</feature>
<feature type="sequence variant" id="VAR_007822" description="In SBHX; dbSNP:rs122457137." evidence="9">
    <original>R</original>
    <variation>H</variation>
    <location>
        <position position="59"/>
    </location>
</feature>
<feature type="sequence variant" id="VAR_007821" description="In LISX1 and SBHX; dbSNP:rs122457137." evidence="19">
    <original>R</original>
    <variation>L</variation>
    <location>
        <position position="59"/>
    </location>
</feature>
<feature type="sequence variant" id="VAR_026024" description="In LISX1." evidence="14">
    <original>N</original>
    <variation>D</variation>
    <location>
        <position position="60"/>
    </location>
</feature>
<feature type="sequence variant" id="VAR_007823" description="In LISX1 and SBHX; dbSNP:rs104894779." evidence="18">
    <original>D</original>
    <variation>N</variation>
    <location>
        <position position="62"/>
    </location>
</feature>
<feature type="sequence variant" id="VAR_026025" description="In SBHX." evidence="13">
    <original>G</original>
    <variation>E</variation>
    <location>
        <position position="67"/>
    </location>
</feature>
<feature type="sequence variant" id="VAR_026026" description="In LISX1; dbSNP:rs104894786." evidence="14">
    <original>A</original>
    <variation>S</variation>
    <location>
        <position position="71"/>
    </location>
</feature>
<feature type="sequence variant" id="VAR_010202" description="In SBH; dbSNP:rs104894784." evidence="7">
    <original>R</original>
    <variation>H</variation>
    <location>
        <position position="78"/>
    </location>
</feature>
<feature type="sequence variant" id="VAR_007824" description="In SBHX; dbSNP:rs104894784." evidence="9 21">
    <original>R</original>
    <variation>L</variation>
    <location>
        <position position="78"/>
    </location>
</feature>
<feature type="sequence variant" id="VAR_007825" description="In SBHX." evidence="9">
    <original>D</original>
    <variation>H</variation>
    <location>
        <position position="86"/>
    </location>
</feature>
<feature type="sequence variant" id="VAR_010536" description="In SBHX; mild; dbSNP:rs104894785." evidence="7 9">
    <original>R</original>
    <variation>G</variation>
    <location>
        <position position="89"/>
    </location>
</feature>
<feature type="sequence variant" id="VAR_026027" description="In SBHX; dbSNP:rs587783537." evidence="9">
    <original>L</original>
    <variation>R</variation>
    <location>
        <position position="97"/>
    </location>
</feature>
<feature type="sequence variant" id="VAR_007826" description="In LISX1 and SBHX." evidence="9 21">
    <original>G</original>
    <variation>A</variation>
    <location>
        <position position="100"/>
    </location>
</feature>
<feature type="sequence variant" id="VAR_007827" description="In LISX1; dbSNP:rs587783541." evidence="22">
    <original>R</original>
    <variation>S</variation>
    <location>
        <position position="102"/>
    </location>
</feature>
<feature type="sequence variant" id="VAR_026028" description="In SBHX." evidence="9">
    <original>I</original>
    <variation>T</variation>
    <location>
        <position position="104"/>
    </location>
</feature>
<feature type="sequence variant" id="VAR_007829" description="In SBHX." evidence="20">
    <original>Y</original>
    <variation>D</variation>
    <location>
        <position position="125"/>
    </location>
</feature>
<feature type="sequence variant" id="VAR_007828" description="In LISX1 and SBHX; dbSNP:rs104894781." evidence="18">
    <original>Y</original>
    <variation>H</variation>
    <location>
        <position position="125"/>
    </location>
</feature>
<feature type="sequence variant" id="VAR_026029" description="In SBHX; dbSNP:rs587783558." evidence="13">
    <original>R</original>
    <variation>C</variation>
    <location>
        <position position="178"/>
    </location>
</feature>
<feature type="sequence variant" id="VAR_007830" description="In SBHX; dbSNP:rs587783559.">
    <original>R</original>
    <variation>L</variation>
    <location>
        <position position="178"/>
    </location>
</feature>
<feature type="sequence variant" id="VAR_007831" description="In SBHX; dbSNP:rs587783562." evidence="6 9 21">
    <original>R</original>
    <variation>C</variation>
    <location>
        <position position="186"/>
    </location>
</feature>
<feature type="sequence variant" id="VAR_026030" description="In SBHX." evidence="9">
    <original>P</original>
    <variation>L</variation>
    <location>
        <position position="191"/>
    </location>
</feature>
<feature type="sequence variant" id="VAR_007832" description="In SBHX; dbSNP:rs587783566." evidence="23">
    <original>P</original>
    <variation>R</variation>
    <location>
        <position position="191"/>
    </location>
</feature>
<feature type="sequence variant" id="VAR_007833" description="In LISX1 and SBHX; dbSNP:rs104894780." evidence="9 18">
    <original>R</original>
    <variation>W</variation>
    <location>
        <position position="192"/>
    </location>
</feature>
<feature type="sequence variant" id="VAR_026031" description="In LISX1; dbSNP:rs56030372." evidence="9 10">
    <original>R</original>
    <variation>H</variation>
    <location>
        <position position="196"/>
    </location>
</feature>
<feature type="sequence variant" id="VAR_026032" description="In epilepsy; resistant partial seizures; related to 'cryptogenic' epilepsy; dbSNP:rs587783568." evidence="12">
    <original>R</original>
    <variation>S</variation>
    <location>
        <position position="196"/>
    </location>
</feature>
<feature type="sequence variant" id="VAR_026033" description="In SBHX." evidence="9">
    <original>N</original>
    <variation>I</variation>
    <location>
        <position position="200"/>
    </location>
</feature>
<feature type="sequence variant" id="VAR_007834" description="In SBHX." evidence="9 21">
    <original>N</original>
    <variation>K</variation>
    <location>
        <position position="200"/>
    </location>
</feature>
<feature type="sequence variant" id="VAR_026034" description="In SBHX; dbSNP:rs587783570." evidence="9">
    <original>T</original>
    <variation>A</variation>
    <location>
        <position position="203"/>
    </location>
</feature>
<feature type="sequence variant" id="VAR_007835" description="In LISX1 and SBHX; dbSNP:rs104894782." evidence="9 19">
    <original>T</original>
    <variation>R</variation>
    <location>
        <position position="203"/>
    </location>
</feature>
<feature type="sequence variant" id="VAR_007836" description="In SBHX; dbSNP:rs587783574." evidence="9">
    <original>I</original>
    <variation>T</variation>
    <location>
        <position position="214"/>
    </location>
</feature>
<feature type="sequence variant" id="VAR_007837" description="In SBHX; dbSNP:rs1603423268." evidence="23">
    <original>T</original>
    <variation>I</variation>
    <location>
        <position position="222"/>
    </location>
</feature>
<feature type="sequence variant" id="VAR_007838" description="In SBHX." evidence="20">
    <original>G</original>
    <variation>E</variation>
    <location>
        <position position="223"/>
    </location>
</feature>
<feature type="sequence variant" id="VAR_026035" description="In SBHX." evidence="9">
    <original>G</original>
    <variation>V</variation>
    <location>
        <position position="223"/>
    </location>
</feature>
<feature type="sequence variant" id="VAR_007839" description="In SBHX; dbSNP:rs1324159050." evidence="23">
    <original>V</original>
    <variation>I</variation>
    <location>
        <position position="236"/>
    </location>
</feature>
<feature type="sequence variant" id="VAR_026036" description="In LISX1." evidence="14">
    <original>F</original>
    <variation>L</variation>
    <location>
        <position position="243"/>
    </location>
</feature>
<feature type="sequence variant" id="VAR_007840" description="In SBHX." evidence="23">
    <original>I</original>
    <variation>N</variation>
    <location>
        <position position="250"/>
    </location>
</feature>
<feature type="sequence variant" id="VAR_007841" description="In SBHX." evidence="20">
    <original>I</original>
    <variation>T</variation>
    <location>
        <position position="250"/>
    </location>
</feature>
<feature type="sequence variant" id="VAR_026037" description="In SBHX; dbSNP:rs587783585." evidence="9">
    <original>A</original>
    <variation>S</variation>
    <location>
        <position position="251"/>
    </location>
</feature>
<feature type="sequence variant" id="VAR_026038" description="In SBHX." evidence="8">
    <original>A</original>
    <variation>V</variation>
    <location>
        <position position="251"/>
    </location>
</feature>
<feature type="sequence variant" id="VAR_007842" description="In SBHX." evidence="23">
    <original>G</original>
    <variation>D</variation>
    <location>
        <position position="253"/>
    </location>
</feature>
<feature type="sequence variant" id="VAR_077482" description="In LISX1 and SBHX; decreased tubulin binding; dbSNP:rs398124557." evidence="17">
    <original>D</original>
    <variation>G</variation>
    <location>
        <position position="262"/>
    </location>
</feature>
<feature type="strand" evidence="30">
    <location>
        <begin position="53"/>
        <end position="59"/>
    </location>
</feature>
<feature type="strand" evidence="30">
    <location>
        <begin position="68"/>
        <end position="72"/>
    </location>
</feature>
<feature type="turn" evidence="30">
    <location>
        <begin position="74"/>
        <end position="76"/>
    </location>
</feature>
<feature type="strand" evidence="30">
    <location>
        <begin position="77"/>
        <end position="79"/>
    </location>
</feature>
<feature type="helix" evidence="30">
    <location>
        <begin position="80"/>
        <end position="91"/>
    </location>
</feature>
<feature type="turn" evidence="30">
    <location>
        <begin position="94"/>
        <end position="96"/>
    </location>
</feature>
<feature type="strand" evidence="30">
    <location>
        <begin position="103"/>
        <end position="106"/>
    </location>
</feature>
<feature type="strand" evidence="29">
    <location>
        <begin position="110"/>
        <end position="113"/>
    </location>
</feature>
<feature type="helix" evidence="30">
    <location>
        <begin position="116"/>
        <end position="118"/>
    </location>
</feature>
<feature type="strand" evidence="30">
    <location>
        <begin position="124"/>
        <end position="131"/>
    </location>
</feature>
<feature type="turn" evidence="30">
    <location>
        <begin position="138"/>
        <end position="141"/>
    </location>
</feature>
<feature type="turn" evidence="30">
    <location>
        <begin position="144"/>
        <end position="147"/>
    </location>
</feature>
<feature type="turn" evidence="31">
    <location>
        <begin position="175"/>
        <end position="177"/>
    </location>
</feature>
<feature type="strand" evidence="31">
    <location>
        <begin position="180"/>
        <end position="191"/>
    </location>
</feature>
<feature type="strand" evidence="31">
    <location>
        <begin position="194"/>
        <end position="199"/>
    </location>
</feature>
<feature type="turn" evidence="31">
    <location>
        <begin position="201"/>
        <end position="203"/>
    </location>
</feature>
<feature type="helix" evidence="31">
    <location>
        <begin position="207"/>
        <end position="217"/>
    </location>
</feature>
<feature type="strand" evidence="31">
    <location>
        <begin position="228"/>
        <end position="230"/>
    </location>
</feature>
<feature type="helix" evidence="31">
    <location>
        <begin position="239"/>
        <end position="242"/>
    </location>
</feature>
<feature type="strand" evidence="31">
    <location>
        <begin position="243"/>
        <end position="245"/>
    </location>
</feature>
<feature type="strand" evidence="31">
    <location>
        <begin position="248"/>
        <end position="252"/>
    </location>
</feature>
<feature type="helix" evidence="31">
    <location>
        <begin position="254"/>
        <end position="256"/>
    </location>
</feature>
<name>DCX_HUMAN</name>
<comment type="function">
    <text evidence="15">Microtubule-associated protein required for initial steps of neuronal dispersion and cortex lamination during cerebral cortex development. May act by competing with the putative neuronal protein kinase DCLK1 in binding to a target protein. May in that way participate in a signaling pathway that is crucial for neuronal interaction before and during migration, possibly as part of a calcium ion-dependent signal transduction pathway. May be part with PAFAH1B1/LIS-1 of overlapping, but distinct, signaling pathways that promote neuronal migration.</text>
</comment>
<comment type="subunit">
    <text evidence="16 17">Interacts with tubulin (PubMed:27292316). Interacts with USP9X (PubMed:24607389).</text>
</comment>
<comment type="interaction">
    <interactant intactId="EBI-8646694">
        <id>O43602</id>
    </interactant>
    <interactant intactId="EBI-11910382">
        <id>Q9BSE5</id>
        <label>AGMAT</label>
    </interactant>
    <organismsDiffer>false</organismsDiffer>
    <experiments>2</experiments>
</comment>
<comment type="interaction">
    <interactant intactId="EBI-8646694">
        <id>O43602</id>
    </interactant>
    <interactant intactId="EBI-739580">
        <id>Q13137</id>
        <label>CALCOCO2</label>
    </interactant>
    <organismsDiffer>false</organismsDiffer>
    <experiments>3</experiments>
</comment>
<comment type="interaction">
    <interactant intactId="EBI-8646694">
        <id>O43602</id>
    </interactant>
    <interactant intactId="EBI-618309">
        <id>Q08379</id>
        <label>GOLGA2</label>
    </interactant>
    <organismsDiffer>false</organismsDiffer>
    <experiments>4</experiments>
</comment>
<comment type="interaction">
    <interactant intactId="EBI-8646694">
        <id>O43602</id>
    </interactant>
    <interactant intactId="EBI-745305">
        <id>Q13422</id>
        <label>IKZF1</label>
    </interactant>
    <organismsDiffer>false</organismsDiffer>
    <experiments>4</experiments>
</comment>
<comment type="interaction">
    <interactant intactId="EBI-8646694">
        <id>O43602</id>
    </interactant>
    <interactant intactId="EBI-2125614">
        <id>Q9BVG8</id>
        <label>KIFC3</label>
    </interactant>
    <organismsDiffer>false</organismsDiffer>
    <experiments>3</experiments>
</comment>
<comment type="interaction">
    <interactant intactId="EBI-8646694">
        <id>O43602</id>
    </interactant>
    <interactant intactId="EBI-10171697">
        <id>Q6A162</id>
        <label>KRT40</label>
    </interactant>
    <organismsDiffer>false</organismsDiffer>
    <experiments>3</experiments>
</comment>
<comment type="interaction">
    <interactant intactId="EBI-8646694">
        <id>O43602</id>
    </interactant>
    <interactant intactId="EBI-10171774">
        <id>P60410</id>
        <label>KRTAP10-8</label>
    </interactant>
    <organismsDiffer>false</organismsDiffer>
    <experiments>3</experiments>
</comment>
<comment type="interaction">
    <interactant intactId="EBI-8646694">
        <id>O43602</id>
    </interactant>
    <interactant intactId="EBI-2864512">
        <id>P50221</id>
        <label>MEOX1</label>
    </interactant>
    <organismsDiffer>false</organismsDiffer>
    <experiments>3</experiments>
</comment>
<comment type="interaction">
    <interactant intactId="EBI-8646694">
        <id>O43602</id>
    </interactant>
    <interactant intactId="EBI-10172526">
        <id>Q9UJV3-2</id>
        <label>MID2</label>
    </interactant>
    <organismsDiffer>false</organismsDiffer>
    <experiments>3</experiments>
</comment>
<comment type="interaction">
    <interactant intactId="EBI-8646694">
        <id>O43602</id>
    </interactant>
    <interactant intactId="EBI-726876">
        <id>Q6NUQ1</id>
        <label>RINT1</label>
    </interactant>
    <organismsDiffer>false</organismsDiffer>
    <experiments>4</experiments>
</comment>
<comment type="interaction">
    <interactant intactId="EBI-8646694">
        <id>O43602</id>
    </interactant>
    <interactant intactId="EBI-413317">
        <id>Q96R06</id>
        <label>SPAG5</label>
    </interactant>
    <organismsDiffer>false</organismsDiffer>
    <experiments>3</experiments>
</comment>
<comment type="interaction">
    <interactant intactId="EBI-8646694">
        <id>O43602</id>
    </interactant>
    <interactant intactId="EBI-717399">
        <id>Q9BSI4</id>
        <label>TINF2</label>
    </interactant>
    <organismsDiffer>false</organismsDiffer>
    <experiments>2</experiments>
</comment>
<comment type="interaction">
    <interactant intactId="EBI-8646694">
        <id>O43602</id>
    </interactant>
    <interactant intactId="EBI-740098">
        <id>P36406</id>
        <label>TRIM23</label>
    </interactant>
    <organismsDiffer>false</organismsDiffer>
    <experiments>3</experiments>
</comment>
<comment type="interaction">
    <interactant intactId="EBI-8646694">
        <id>O43602</id>
    </interactant>
    <interactant intactId="EBI-719493">
        <id>P14373</id>
        <label>TRIM27</label>
    </interactant>
    <organismsDiffer>false</organismsDiffer>
    <experiments>3</experiments>
</comment>
<comment type="interaction">
    <interactant intactId="EBI-8646694">
        <id>O43602</id>
    </interactant>
    <interactant intactId="EBI-722671">
        <id>O15062</id>
        <label>ZBTB5</label>
    </interactant>
    <organismsDiffer>false</organismsDiffer>
    <experiments>4</experiments>
</comment>
<comment type="interaction">
    <interactant intactId="EBI-14148644">
        <id>O43602-2</id>
    </interactant>
    <interactant intactId="EBI-11975051">
        <id>Q8TD16-2</id>
        <label>BICD2</label>
    </interactant>
    <organismsDiffer>false</organismsDiffer>
    <experiments>3</experiments>
</comment>
<comment type="interaction">
    <interactant intactId="EBI-14148644">
        <id>O43602-2</id>
    </interactant>
    <interactant intactId="EBI-5661036">
        <id>A1L4K1</id>
        <label>FSD2</label>
    </interactant>
    <organismsDiffer>false</organismsDiffer>
    <experiments>3</experiments>
</comment>
<comment type="interaction">
    <interactant intactId="EBI-14148644">
        <id>O43602-2</id>
    </interactant>
    <interactant intactId="EBI-618309">
        <id>Q08379</id>
        <label>GOLGA2</label>
    </interactant>
    <organismsDiffer>false</organismsDiffer>
    <experiments>3</experiments>
</comment>
<comment type="interaction">
    <interactant intactId="EBI-14148644">
        <id>O43602-2</id>
    </interactant>
    <interactant intactId="EBI-10961706">
        <id>Q96ED9-2</id>
        <label>HOOK2</label>
    </interactant>
    <organismsDiffer>false</organismsDiffer>
    <experiments>3</experiments>
</comment>
<comment type="interaction">
    <interactant intactId="EBI-14148644">
        <id>O43602-2</id>
    </interactant>
    <interactant intactId="EBI-11522367">
        <id>Q13422-7</id>
        <label>IKZF1</label>
    </interactant>
    <organismsDiffer>false</organismsDiffer>
    <experiments>3</experiments>
</comment>
<comment type="interaction">
    <interactant intactId="EBI-14148644">
        <id>O43602-2</id>
    </interactant>
    <interactant intactId="EBI-713568">
        <id>P45984</id>
        <label>MAPK9</label>
    </interactant>
    <organismsDiffer>false</organismsDiffer>
    <experiments>3</experiments>
</comment>
<comment type="interaction">
    <interactant intactId="EBI-14148644">
        <id>O43602-2</id>
    </interactant>
    <interactant intactId="EBI-2864512">
        <id>P50221</id>
        <label>MEOX1</label>
    </interactant>
    <organismsDiffer>false</organismsDiffer>
    <experiments>3</experiments>
</comment>
<comment type="interaction">
    <interactant intactId="EBI-14148644">
        <id>O43602-2</id>
    </interactant>
    <interactant intactId="EBI-16439278">
        <id>Q6FHY5</id>
        <label>MEOX2</label>
    </interactant>
    <organismsDiffer>false</organismsDiffer>
    <experiments>3</experiments>
</comment>
<comment type="interaction">
    <interactant intactId="EBI-14148644">
        <id>O43602-2</id>
    </interactant>
    <interactant intactId="EBI-10172526">
        <id>Q9UJV3-2</id>
        <label>MID2</label>
    </interactant>
    <organismsDiffer>false</organismsDiffer>
    <experiments>3</experiments>
</comment>
<comment type="interaction">
    <interactant intactId="EBI-14148644">
        <id>O43602-2</id>
    </interactant>
    <interactant intactId="EBI-11522433">
        <id>Q5JR59-3</id>
        <label>MTUS2</label>
    </interactant>
    <organismsDiffer>false</organismsDiffer>
    <experiments>4</experiments>
</comment>
<comment type="interaction">
    <interactant intactId="EBI-14148644">
        <id>O43602-2</id>
    </interactant>
    <interactant intactId="EBI-2799833">
        <id>Q8N1B4</id>
        <label>VPS52</label>
    </interactant>
    <organismsDiffer>false</organismsDiffer>
    <experiments>3</experiments>
</comment>
<comment type="interaction">
    <interactant intactId="EBI-14148644">
        <id>O43602-2</id>
    </interactant>
    <interactant intactId="EBI-12017160">
        <id>Q96DT7-3</id>
        <label>ZBTB10</label>
    </interactant>
    <organismsDiffer>false</organismsDiffer>
    <experiments>3</experiments>
</comment>
<comment type="interaction">
    <interactant intactId="EBI-14148644">
        <id>O43602-2</id>
    </interactant>
    <interactant intactId="EBI-722671">
        <id>O15062</id>
        <label>ZBTB5</label>
    </interactant>
    <organismsDiffer>false</organismsDiffer>
    <experiments>3</experiments>
</comment>
<comment type="interaction">
    <interactant intactId="EBI-14148644">
        <id>O43602-2</id>
    </interactant>
    <interactant intactId="EBI-527853">
        <id>Q9UGI0</id>
        <label>ZRANB1</label>
    </interactant>
    <organismsDiffer>false</organismsDiffer>
    <experiments>3</experiments>
</comment>
<comment type="subcellular location">
    <subcellularLocation>
        <location evidence="28">Cytoplasm</location>
    </subcellularLocation>
    <subcellularLocation>
        <location evidence="2">Cell projection</location>
        <location evidence="2">Neuron projection</location>
    </subcellularLocation>
    <text evidence="2">Localizes at neurite tips.</text>
</comment>
<comment type="alternative products">
    <event type="alternative splicing"/>
    <isoform>
        <id>O43602-1</id>
        <name>1</name>
        <sequence type="displayed"/>
    </isoform>
    <isoform>
        <id>O43602-2</id>
        <name>2</name>
        <sequence type="described" ref="VSP_058155"/>
    </isoform>
    <text>Additional isoforms seem to exist.</text>
</comment>
<comment type="tissue specificity">
    <text>Highly expressed in neuronal cells of fetal brain (in the majority of cells of the cortical plate, intermediate zone and ventricular zone), but not expressed in other fetal tissues. In the adult, highly expressed in the brain frontal lobe, but very low expression in other regions of brain, and not detected in heart, placenta, lung, liver, skeletal muscles, kidney and pancreas.</text>
</comment>
<comment type="PTM">
    <text evidence="1 2">Phosphorylation by MARK1, MARK2 and PKA regulates its ability to bind microtubules (By similarity). Phosphorylation at Ser-265 and Ser-297 seems to occur only in neonatal brain, the levels falling precipitously by postnatal day 21 (By similarity).</text>
</comment>
<comment type="PTM">
    <text evidence="1">Ubiquitinated by MDM2, leading to its degradation by the proteasome. Ubiquitinated by MDM2 and subsequent degradation leads to reduce the dendritic spine density of olfactory bulb granule cells.</text>
</comment>
<comment type="disease" evidence="10 14 17 18 19 21 22">
    <disease id="DI-00673">
        <name>Lissencephaly, X-linked 1</name>
        <acronym>LISX1</acronym>
        <description>A classic lissencephaly characterized by intellectual disability and seizures that are more severe in male patients. Affected boys show an abnormally thick cortex with absent or severely reduced gyri. Clinical manifestations include feeding problems, abnormal muscular tone, seizures and severe to profound psychomotor retardation. Female patients display a less severe phenotype referred to as 'doublecortex'.</description>
        <dbReference type="MIM" id="300067"/>
    </disease>
    <text>The disease is caused by variants affecting the gene represented in this entry.</text>
</comment>
<comment type="disease" evidence="6 7 8 9 11 13 20 23">
    <disease id="DI-01095">
        <name>Subcortical band heterotopia X-linked</name>
        <acronym>SBHX</acronym>
        <description>SBHX is a mild brain malformation of the lissencephaly spectrum. It is characterized by bilateral and symmetric plates or bands of gray matter found in the central white matter between the cortex and cerebral ventricles, cerebral convolutions usually appearing normal.</description>
        <dbReference type="MIM" id="300067"/>
    </disease>
    <text>The disease is caused by variants affecting the gene represented in this entry.</text>
</comment>
<comment type="disease">
    <text>A chromosomal aberration involving DCX is found in lissencephaly. Translocation t(X;2)(q22.3;p25.1).</text>
</comment>
<comment type="sequence caution" evidence="28">
    <conflict type="erroneous gene model prediction">
        <sequence resource="EMBL-CDS" id="EAX02642"/>
    </conflict>
</comment>
<comment type="sequence caution" evidence="28">
    <conflict type="erroneous gene model prediction">
        <sequence resource="EMBL-CDS" id="EAX02644"/>
    </conflict>
</comment>
<comment type="sequence caution" evidence="28">
    <conflict type="erroneous gene model prediction">
        <sequence resource="EMBL-CDS" id="EAX02649"/>
    </conflict>
</comment>
<keyword id="KW-0002">3D-structure</keyword>
<keyword id="KW-0025">Alternative splicing</keyword>
<keyword id="KW-0966">Cell projection</keyword>
<keyword id="KW-0160">Chromosomal rearrangement</keyword>
<keyword id="KW-0963">Cytoplasm</keyword>
<keyword id="KW-0217">Developmental protein</keyword>
<keyword id="KW-0221">Differentiation</keyword>
<keyword id="KW-0225">Disease variant</keyword>
<keyword id="KW-0887">Epilepsy</keyword>
<keyword id="KW-0451">Lissencephaly</keyword>
<keyword id="KW-0493">Microtubule</keyword>
<keyword id="KW-0524">Neurogenesis</keyword>
<keyword id="KW-0597">Phosphoprotein</keyword>
<keyword id="KW-1267">Proteomics identification</keyword>
<keyword id="KW-1185">Reference proteome</keyword>
<keyword id="KW-0677">Repeat</keyword>
<keyword id="KW-0832">Ubl conjugation</keyword>
<dbReference type="EMBL" id="AJ003112">
    <property type="protein sequence ID" value="CAA05867.1"/>
    <property type="molecule type" value="mRNA"/>
</dbReference>
<dbReference type="EMBL" id="AJ005592">
    <property type="protein sequence ID" value="CAA06617.1"/>
    <property type="molecule type" value="Genomic_DNA"/>
</dbReference>
<dbReference type="EMBL" id="AJ005593">
    <property type="protein sequence ID" value="CAA06617.1"/>
    <property type="status" value="JOINED"/>
    <property type="molecule type" value="Genomic_DNA"/>
</dbReference>
<dbReference type="EMBL" id="AJ005594">
    <property type="protein sequence ID" value="CAA06617.1"/>
    <property type="status" value="JOINED"/>
    <property type="molecule type" value="Genomic_DNA"/>
</dbReference>
<dbReference type="EMBL" id="AJ005595">
    <property type="protein sequence ID" value="CAA06617.1"/>
    <property type="status" value="JOINED"/>
    <property type="molecule type" value="Genomic_DNA"/>
</dbReference>
<dbReference type="EMBL" id="AJ005596">
    <property type="protein sequence ID" value="CAA06617.1"/>
    <property type="status" value="JOINED"/>
    <property type="molecule type" value="Genomic_DNA"/>
</dbReference>
<dbReference type="EMBL" id="AJ005597">
    <property type="protein sequence ID" value="CAA06617.1"/>
    <property type="status" value="JOINED"/>
    <property type="molecule type" value="Genomic_DNA"/>
</dbReference>
<dbReference type="EMBL" id="AF034634">
    <property type="protein sequence ID" value="AAC52037.1"/>
    <property type="molecule type" value="mRNA"/>
</dbReference>
<dbReference type="EMBL" id="AF040254">
    <property type="protein sequence ID" value="AAC31797.1"/>
    <property type="molecule type" value="mRNA"/>
</dbReference>
<dbReference type="EMBL" id="AF040255">
    <property type="protein sequence ID" value="AAC31696.1"/>
    <property type="molecule type" value="mRNA"/>
</dbReference>
<dbReference type="EMBL" id="AL031117">
    <property type="status" value="NOT_ANNOTATED_CDS"/>
    <property type="molecule type" value="Genomic_DNA"/>
</dbReference>
<dbReference type="EMBL" id="AL450490">
    <property type="status" value="NOT_ANNOTATED_CDS"/>
    <property type="molecule type" value="Genomic_DNA"/>
</dbReference>
<dbReference type="EMBL" id="CH471120">
    <property type="protein sequence ID" value="EAX02644.1"/>
    <property type="status" value="ALT_SEQ"/>
    <property type="molecule type" value="Genomic_DNA"/>
</dbReference>
<dbReference type="EMBL" id="CH471120">
    <property type="protein sequence ID" value="EAX02645.1"/>
    <property type="molecule type" value="Genomic_DNA"/>
</dbReference>
<dbReference type="EMBL" id="CH471120">
    <property type="protein sequence ID" value="EAX02642.1"/>
    <property type="status" value="ALT_SEQ"/>
    <property type="molecule type" value="Genomic_DNA"/>
</dbReference>
<dbReference type="EMBL" id="CH471120">
    <property type="protein sequence ID" value="EAX02643.1"/>
    <property type="molecule type" value="Genomic_DNA"/>
</dbReference>
<dbReference type="EMBL" id="CH471120">
    <property type="protein sequence ID" value="EAX02646.1"/>
    <property type="molecule type" value="Genomic_DNA"/>
</dbReference>
<dbReference type="EMBL" id="CH471120">
    <property type="protein sequence ID" value="EAX02647.1"/>
    <property type="molecule type" value="Genomic_DNA"/>
</dbReference>
<dbReference type="EMBL" id="CH471120">
    <property type="protein sequence ID" value="EAX02649.1"/>
    <property type="status" value="ALT_SEQ"/>
    <property type="molecule type" value="Genomic_DNA"/>
</dbReference>
<dbReference type="EMBL" id="BC027925">
    <property type="protein sequence ID" value="AAH27925.1"/>
    <property type="molecule type" value="mRNA"/>
</dbReference>
<dbReference type="CCDS" id="CCDS14557.1">
    <molecule id="O43602-2"/>
</dbReference>
<dbReference type="CCDS" id="CCDS14558.1">
    <molecule id="O43602-1"/>
</dbReference>
<dbReference type="RefSeq" id="NP_000546.2">
    <property type="nucleotide sequence ID" value="NM_000555.3"/>
</dbReference>
<dbReference type="RefSeq" id="NP_001356300.1">
    <molecule id="O43602-1"/>
    <property type="nucleotide sequence ID" value="NM_001369371.1"/>
</dbReference>
<dbReference type="RefSeq" id="NP_835364.1">
    <molecule id="O43602-2"/>
    <property type="nucleotide sequence ID" value="NM_178151.3"/>
</dbReference>
<dbReference type="RefSeq" id="NP_835365.1">
    <molecule id="O43602-1"/>
    <property type="nucleotide sequence ID" value="NM_178152.3"/>
</dbReference>
<dbReference type="RefSeq" id="NP_835366.1">
    <molecule id="O43602-2"/>
    <property type="nucleotide sequence ID" value="NM_178153.3"/>
</dbReference>
<dbReference type="PDB" id="1MJD">
    <property type="method" value="NMR"/>
    <property type="chains" value="A=45-150"/>
</dbReference>
<dbReference type="PDB" id="2BQQ">
    <property type="method" value="X-ray"/>
    <property type="resolution" value="2.20 A"/>
    <property type="chains" value="A=45-150"/>
</dbReference>
<dbReference type="PDB" id="2XRP">
    <property type="method" value="EM"/>
    <property type="resolution" value="8.20 A"/>
    <property type="chains" value="I=46-140"/>
</dbReference>
<dbReference type="PDB" id="4ATU">
    <property type="method" value="EM"/>
    <property type="resolution" value="8.30 A"/>
    <property type="chains" value="I=2-365"/>
</dbReference>
<dbReference type="PDB" id="5IKC">
    <property type="method" value="X-ray"/>
    <property type="resolution" value="2.06 A"/>
    <property type="chains" value="M/N=52-140"/>
</dbReference>
<dbReference type="PDB" id="5IN7">
    <property type="method" value="X-ray"/>
    <property type="resolution" value="2.48 A"/>
    <property type="chains" value="A/B=46-150"/>
</dbReference>
<dbReference type="PDB" id="5IO9">
    <property type="method" value="X-ray"/>
    <property type="resolution" value="1.30 A"/>
    <property type="chains" value="A/B=52-149"/>
</dbReference>
<dbReference type="PDB" id="5IOI">
    <property type="method" value="X-ray"/>
    <property type="resolution" value="2.40 A"/>
    <property type="chains" value="A/B/C/D/E/F=52-150"/>
</dbReference>
<dbReference type="PDB" id="5IP4">
    <property type="method" value="X-ray"/>
    <property type="resolution" value="1.81 A"/>
    <property type="chains" value="D/E=170-260"/>
</dbReference>
<dbReference type="PDB" id="6FNZ">
    <property type="method" value="X-ray"/>
    <property type="resolution" value="2.23 A"/>
    <property type="chains" value="A/B/C/D=174-254"/>
</dbReference>
<dbReference type="PDB" id="6REV">
    <property type="method" value="EM"/>
    <property type="resolution" value="3.80 A"/>
    <property type="chains" value="N=44-142"/>
</dbReference>
<dbReference type="PDB" id="6RF2">
    <property type="method" value="EM"/>
    <property type="resolution" value="4.20 A"/>
    <property type="chains" value="C=178-264"/>
</dbReference>
<dbReference type="PDB" id="6RF8">
    <property type="method" value="EM"/>
    <property type="resolution" value="3.80 A"/>
    <property type="chains" value="N=44-142"/>
</dbReference>
<dbReference type="PDB" id="6RFD">
    <property type="method" value="EM"/>
    <property type="resolution" value="3.90 A"/>
    <property type="chains" value="N=44-142"/>
</dbReference>
<dbReference type="PDBsum" id="1MJD"/>
<dbReference type="PDBsum" id="2BQQ"/>
<dbReference type="PDBsum" id="2XRP"/>
<dbReference type="PDBsum" id="4ATU"/>
<dbReference type="PDBsum" id="5IKC"/>
<dbReference type="PDBsum" id="5IN7"/>
<dbReference type="PDBsum" id="5IO9"/>
<dbReference type="PDBsum" id="5IOI"/>
<dbReference type="PDBsum" id="5IP4"/>
<dbReference type="PDBsum" id="6FNZ"/>
<dbReference type="PDBsum" id="6REV"/>
<dbReference type="PDBsum" id="6RF2"/>
<dbReference type="PDBsum" id="6RF8"/>
<dbReference type="PDBsum" id="6RFD"/>
<dbReference type="BMRB" id="O43602"/>
<dbReference type="EMDB" id="EMD-1788"/>
<dbReference type="EMDB" id="EMD-2095"/>
<dbReference type="EMDB" id="EMD-4858"/>
<dbReference type="EMDB" id="EMD-4861"/>
<dbReference type="EMDB" id="EMD-4862"/>
<dbReference type="EMDB" id="EMD-4863"/>
<dbReference type="SMR" id="O43602"/>
<dbReference type="BioGRID" id="108008">
    <property type="interactions" value="86"/>
</dbReference>
<dbReference type="FunCoup" id="O43602">
    <property type="interactions" value="175"/>
</dbReference>
<dbReference type="IntAct" id="O43602">
    <property type="interactions" value="64"/>
</dbReference>
<dbReference type="MINT" id="O43602"/>
<dbReference type="STRING" id="9606.ENSP00000490614"/>
<dbReference type="GlyGen" id="O43602">
    <property type="glycosylation" value="1 site"/>
</dbReference>
<dbReference type="iPTMnet" id="O43602"/>
<dbReference type="PhosphoSitePlus" id="O43602"/>
<dbReference type="BioMuta" id="DCX"/>
<dbReference type="jPOST" id="O43602"/>
<dbReference type="MassIVE" id="O43602"/>
<dbReference type="PaxDb" id="9606-ENSP00000337697"/>
<dbReference type="PeptideAtlas" id="O43602"/>
<dbReference type="ProteomicsDB" id="49072">
    <molecule id="O43602-1"/>
</dbReference>
<dbReference type="ProteomicsDB" id="49073">
    <molecule id="O43602-2"/>
</dbReference>
<dbReference type="ABCD" id="O43602">
    <property type="antibodies" value="2 sequenced antibodies"/>
</dbReference>
<dbReference type="Antibodypedia" id="29535">
    <property type="antibodies" value="761 antibodies from 44 providers"/>
</dbReference>
<dbReference type="DNASU" id="1641"/>
<dbReference type="Ensembl" id="ENST00000488120.2">
    <molecule id="O43602-2"/>
    <property type="protein sequence ID" value="ENSP00000419861.1"/>
    <property type="gene ID" value="ENSG00000077279.21"/>
</dbReference>
<dbReference type="Ensembl" id="ENST00000635795.1">
    <molecule id="O43602-1"/>
    <property type="protein sequence ID" value="ENSP00000489635.1"/>
    <property type="gene ID" value="ENSG00000077279.21"/>
</dbReference>
<dbReference type="GeneID" id="1641"/>
<dbReference type="KEGG" id="hsa:1641"/>
<dbReference type="UCSC" id="uc004epd.4">
    <molecule id="O43602-1"/>
    <property type="organism name" value="human"/>
</dbReference>
<dbReference type="AGR" id="HGNC:2714"/>
<dbReference type="CTD" id="1641"/>
<dbReference type="DisGeNET" id="1641"/>
<dbReference type="GeneCards" id="DCX"/>
<dbReference type="GeneReviews" id="DCX"/>
<dbReference type="HGNC" id="HGNC:2714">
    <property type="gene designation" value="DCX"/>
</dbReference>
<dbReference type="HPA" id="ENSG00000077279">
    <property type="expression patterns" value="Tissue enhanced (brain, retina)"/>
</dbReference>
<dbReference type="MalaCards" id="DCX"/>
<dbReference type="MIM" id="300067">
    <property type="type" value="phenotype"/>
</dbReference>
<dbReference type="MIM" id="300121">
    <property type="type" value="gene"/>
</dbReference>
<dbReference type="neXtProt" id="NX_O43602"/>
<dbReference type="OpenTargets" id="ENSG00000077279"/>
<dbReference type="Orphanet" id="2148">
    <property type="disease" value="Lissencephaly type 1 due to doublecortin gene mutation"/>
</dbReference>
<dbReference type="Orphanet" id="99796">
    <property type="disease" value="Subcortical band heterotopia"/>
</dbReference>
<dbReference type="PharmGKB" id="PA27184"/>
<dbReference type="VEuPathDB" id="HostDB:ENSG00000077279"/>
<dbReference type="eggNOG" id="KOG3757">
    <property type="taxonomic scope" value="Eukaryota"/>
</dbReference>
<dbReference type="GeneTree" id="ENSGT00940000161570"/>
<dbReference type="HOGENOM" id="CLU_035041_1_1_1"/>
<dbReference type="InParanoid" id="O43602"/>
<dbReference type="OrthoDB" id="1738954at2759"/>
<dbReference type="PAN-GO" id="O43602">
    <property type="GO annotations" value="4 GO annotations based on evolutionary models"/>
</dbReference>
<dbReference type="TreeFam" id="TF318770"/>
<dbReference type="PathwayCommons" id="O43602"/>
<dbReference type="Reactome" id="R-HSA-447043">
    <property type="pathway name" value="Neurofascin interactions"/>
</dbReference>
<dbReference type="SignaLink" id="O43602"/>
<dbReference type="SIGNOR" id="O43602"/>
<dbReference type="BioGRID-ORCS" id="1641">
    <property type="hits" value="15 hits in 771 CRISPR screens"/>
</dbReference>
<dbReference type="CD-CODE" id="8C2F96ED">
    <property type="entry name" value="Centrosome"/>
</dbReference>
<dbReference type="CD-CODE" id="FB4E32DD">
    <property type="entry name" value="Presynaptic clusters and postsynaptic densities"/>
</dbReference>
<dbReference type="EvolutionaryTrace" id="O43602"/>
<dbReference type="GeneWiki" id="Doublecortin"/>
<dbReference type="GenomeRNAi" id="1641"/>
<dbReference type="Pharos" id="O43602">
    <property type="development level" value="Tbio"/>
</dbReference>
<dbReference type="PRO" id="PR:O43602"/>
<dbReference type="Proteomes" id="UP000005640">
    <property type="component" value="Chromosome X"/>
</dbReference>
<dbReference type="RNAct" id="O43602">
    <property type="molecule type" value="protein"/>
</dbReference>
<dbReference type="Bgee" id="ENSG00000077279">
    <property type="expression patterns" value="Expressed in cortical plate and 80 other cell types or tissues"/>
</dbReference>
<dbReference type="ExpressionAtlas" id="O43602">
    <property type="expression patterns" value="baseline and differential"/>
</dbReference>
<dbReference type="GO" id="GO:0005856">
    <property type="term" value="C:cytoskeleton"/>
    <property type="evidence" value="ECO:0000304"/>
    <property type="project" value="ProtInc"/>
</dbReference>
<dbReference type="GO" id="GO:0005829">
    <property type="term" value="C:cytosol"/>
    <property type="evidence" value="ECO:0000314"/>
    <property type="project" value="HPA"/>
</dbReference>
<dbReference type="GO" id="GO:0005874">
    <property type="term" value="C:microtubule"/>
    <property type="evidence" value="ECO:0007669"/>
    <property type="project" value="UniProtKB-KW"/>
</dbReference>
<dbReference type="GO" id="GO:0005875">
    <property type="term" value="C:microtubule associated complex"/>
    <property type="evidence" value="ECO:0000304"/>
    <property type="project" value="ProtInc"/>
</dbReference>
<dbReference type="GO" id="GO:0043005">
    <property type="term" value="C:neuron projection"/>
    <property type="evidence" value="ECO:0000314"/>
    <property type="project" value="UniProtKB"/>
</dbReference>
<dbReference type="GO" id="GO:0008017">
    <property type="term" value="F:microtubule binding"/>
    <property type="evidence" value="ECO:0000314"/>
    <property type="project" value="UniProtKB"/>
</dbReference>
<dbReference type="GO" id="GO:0019901">
    <property type="term" value="F:protein kinase binding"/>
    <property type="evidence" value="ECO:0000353"/>
    <property type="project" value="UniProtKB"/>
</dbReference>
<dbReference type="GO" id="GO:0035082">
    <property type="term" value="P:axoneme assembly"/>
    <property type="evidence" value="ECO:0007669"/>
    <property type="project" value="InterPro"/>
</dbReference>
<dbReference type="GO" id="GO:0007417">
    <property type="term" value="P:central nervous system development"/>
    <property type="evidence" value="ECO:0000304"/>
    <property type="project" value="ProtInc"/>
</dbReference>
<dbReference type="GO" id="GO:0035556">
    <property type="term" value="P:intracellular signal transduction"/>
    <property type="evidence" value="ECO:0007669"/>
    <property type="project" value="InterPro"/>
</dbReference>
<dbReference type="GO" id="GO:0007399">
    <property type="term" value="P:nervous system development"/>
    <property type="evidence" value="ECO:0000304"/>
    <property type="project" value="ProtInc"/>
</dbReference>
<dbReference type="GO" id="GO:0001764">
    <property type="term" value="P:neuron migration"/>
    <property type="evidence" value="ECO:0000314"/>
    <property type="project" value="UniProtKB"/>
</dbReference>
<dbReference type="GO" id="GO:0060041">
    <property type="term" value="P:retina development in camera-type eye"/>
    <property type="evidence" value="ECO:0007669"/>
    <property type="project" value="InterPro"/>
</dbReference>
<dbReference type="CDD" id="cd16112">
    <property type="entry name" value="DCX1_DCX"/>
    <property type="match status" value="1"/>
</dbReference>
<dbReference type="CDD" id="cd17069">
    <property type="entry name" value="DCX2"/>
    <property type="match status" value="1"/>
</dbReference>
<dbReference type="FunFam" id="3.10.20.230:FF:000003">
    <property type="entry name" value="Neuronal migration protein doublecortin"/>
    <property type="match status" value="1"/>
</dbReference>
<dbReference type="FunFam" id="3.10.20.230:FF:000001">
    <property type="entry name" value="serine/threonine-protein kinase DCLK1 isoform X1"/>
    <property type="match status" value="1"/>
</dbReference>
<dbReference type="Gene3D" id="3.10.20.230">
    <property type="entry name" value="Doublecortin domain"/>
    <property type="match status" value="2"/>
</dbReference>
<dbReference type="InterPro" id="IPR017302">
    <property type="entry name" value="DCX_chordates"/>
</dbReference>
<dbReference type="InterPro" id="IPR003533">
    <property type="entry name" value="Doublecortin_dom"/>
</dbReference>
<dbReference type="InterPro" id="IPR036572">
    <property type="entry name" value="Doublecortin_dom_sf"/>
</dbReference>
<dbReference type="PANTHER" id="PTHR23005:SF4">
    <property type="entry name" value="OXYGEN-REGULATED PROTEIN 1"/>
    <property type="match status" value="1"/>
</dbReference>
<dbReference type="PANTHER" id="PTHR23005">
    <property type="entry name" value="RETINITIS PIGMENTOSA 1 PROTEIN"/>
    <property type="match status" value="1"/>
</dbReference>
<dbReference type="Pfam" id="PF03607">
    <property type="entry name" value="DCX"/>
    <property type="match status" value="2"/>
</dbReference>
<dbReference type="PIRSF" id="PIRSF037870">
    <property type="entry name" value="Doublin"/>
    <property type="match status" value="1"/>
</dbReference>
<dbReference type="SMART" id="SM00537">
    <property type="entry name" value="DCX"/>
    <property type="match status" value="2"/>
</dbReference>
<dbReference type="SUPFAM" id="SSF89837">
    <property type="entry name" value="Doublecortin (DC)"/>
    <property type="match status" value="2"/>
</dbReference>
<dbReference type="PROSITE" id="PS50309">
    <property type="entry name" value="DC"/>
    <property type="match status" value="2"/>
</dbReference>